<proteinExistence type="evidence at protein level"/>
<dbReference type="EC" id="2.1.1.160" evidence="4"/>
<dbReference type="EMBL" id="MN163829">
    <property type="protein sequence ID" value="QIC50342.1"/>
    <property type="molecule type" value="mRNA"/>
</dbReference>
<dbReference type="SMR" id="A0A6C0WW38"/>
<dbReference type="SABIO-RK" id="A0A6C0WW38"/>
<dbReference type="GO" id="GO:0102741">
    <property type="term" value="F:caffeine synthase activity"/>
    <property type="evidence" value="ECO:0007669"/>
    <property type="project" value="UniProtKB-EC"/>
</dbReference>
<dbReference type="GO" id="GO:0046872">
    <property type="term" value="F:metal ion binding"/>
    <property type="evidence" value="ECO:0007669"/>
    <property type="project" value="UniProtKB-KW"/>
</dbReference>
<dbReference type="GO" id="GO:0009820">
    <property type="term" value="P:alkaloid metabolic process"/>
    <property type="evidence" value="ECO:0007669"/>
    <property type="project" value="UniProtKB-KW"/>
</dbReference>
<dbReference type="GO" id="GO:0032259">
    <property type="term" value="P:methylation"/>
    <property type="evidence" value="ECO:0007669"/>
    <property type="project" value="UniProtKB-KW"/>
</dbReference>
<dbReference type="Gene3D" id="1.10.1200.270">
    <property type="entry name" value="Methyltransferase, alpha-helical capping domain"/>
    <property type="match status" value="1"/>
</dbReference>
<dbReference type="Gene3D" id="3.40.50.150">
    <property type="entry name" value="Vaccinia Virus protein VP39"/>
    <property type="match status" value="1"/>
</dbReference>
<dbReference type="InterPro" id="IPR005299">
    <property type="entry name" value="MeTrfase_7"/>
</dbReference>
<dbReference type="InterPro" id="IPR042086">
    <property type="entry name" value="MeTrfase_capping"/>
</dbReference>
<dbReference type="InterPro" id="IPR029063">
    <property type="entry name" value="SAM-dependent_MTases_sf"/>
</dbReference>
<dbReference type="PANTHER" id="PTHR31009">
    <property type="entry name" value="S-ADENOSYL-L-METHIONINE:CARBOXYL METHYLTRANSFERASE FAMILY PROTEIN"/>
    <property type="match status" value="1"/>
</dbReference>
<dbReference type="Pfam" id="PF03492">
    <property type="entry name" value="Methyltransf_7"/>
    <property type="match status" value="1"/>
</dbReference>
<dbReference type="SUPFAM" id="SSF53335">
    <property type="entry name" value="S-adenosyl-L-methionine-dependent methyltransferases"/>
    <property type="match status" value="1"/>
</dbReference>
<sequence length="369" mass="41577">MELATREKVNEVLFMNRGEGESSYAQNSSFTQQVASMAQPALENAVETLFSKDFHLQALNAADLGCAAGPNTFAVISTIKRMMEKKCRELNCQTLELQVYLNDLFGNDFNTLFKGLSSEVIGNKCEEVPCYVMGVPGSFHGRLFPRNSLHLVYSSYSVHWLTQAPKGLTSREGLALNKGKIYISKTSPPVVREAYLSQFHEDFTMFLNYRSQEMVPNGCMVLILRGRQCFDPSDMQSCFTWELLALAIAELVSQGLIDEDKLDTFNIPSYFASLEEVKDIVERDGSFTIDHIEGFDLDSVEMQENDKWVRGEKFTKVVRAFSEPIISSQFGHEIMDKLYDKFTHIVVSDLEAKLPKTTSIILVLSKIVG</sequence>
<name>CKCS_CAMSB</name>
<evidence type="ECO:0000250" key="1">
    <source>
        <dbReference type="UniProtKB" id="A0A6C0WW36"/>
    </source>
</evidence>
<evidence type="ECO:0000250" key="2">
    <source>
        <dbReference type="UniProtKB" id="Q9FLN8"/>
    </source>
</evidence>
<evidence type="ECO:0000250" key="3">
    <source>
        <dbReference type="UniProtKB" id="Q9FZN8"/>
    </source>
</evidence>
<evidence type="ECO:0000269" key="4">
    <source>
    </source>
</evidence>
<evidence type="ECO:0000303" key="5">
    <source>
    </source>
</evidence>
<evidence type="ECO:0000305" key="6"/>
<evidence type="ECO:0000305" key="7">
    <source>
    </source>
</evidence>
<feature type="chain" id="PRO_0000451801" description="3,7-dimethylxanthine N-methyltransferase TCS1">
    <location>
        <begin position="1"/>
        <end position="369"/>
    </location>
</feature>
<feature type="binding site" evidence="1">
    <location>
        <position position="24"/>
    </location>
    <ligand>
        <name>S-adenosyl-L-homocysteine</name>
        <dbReference type="ChEBI" id="CHEBI:57856"/>
    </ligand>
</feature>
<feature type="binding site" evidence="1">
    <location>
        <position position="31"/>
    </location>
    <ligand>
        <name>caffeine</name>
        <dbReference type="ChEBI" id="CHEBI:27732"/>
    </ligand>
</feature>
<feature type="binding site" evidence="1">
    <location>
        <position position="66"/>
    </location>
    <ligand>
        <name>S-adenosyl-L-homocysteine</name>
        <dbReference type="ChEBI" id="CHEBI:57856"/>
    </ligand>
</feature>
<feature type="binding site" evidence="1">
    <location>
        <position position="71"/>
    </location>
    <ligand>
        <name>S-adenosyl-L-homocysteine</name>
        <dbReference type="ChEBI" id="CHEBI:57856"/>
    </ligand>
</feature>
<feature type="binding site" evidence="1">
    <location>
        <position position="103"/>
    </location>
    <ligand>
        <name>S-adenosyl-L-homocysteine</name>
        <dbReference type="ChEBI" id="CHEBI:57856"/>
    </ligand>
</feature>
<feature type="binding site" evidence="1">
    <location>
        <position position="104"/>
    </location>
    <ligand>
        <name>S-adenosyl-L-homocysteine</name>
        <dbReference type="ChEBI" id="CHEBI:57856"/>
    </ligand>
</feature>
<feature type="binding site" evidence="1">
    <location>
        <position position="138"/>
    </location>
    <ligand>
        <name>S-adenosyl-L-homocysteine</name>
        <dbReference type="ChEBI" id="CHEBI:57856"/>
    </ligand>
</feature>
<feature type="binding site" evidence="1">
    <location>
        <position position="139"/>
    </location>
    <ligand>
        <name>S-adenosyl-L-homocysteine</name>
        <dbReference type="ChEBI" id="CHEBI:57856"/>
    </ligand>
</feature>
<feature type="binding site" evidence="1">
    <location>
        <position position="156"/>
    </location>
    <ligand>
        <name>caffeine</name>
        <dbReference type="ChEBI" id="CHEBI:27732"/>
    </ligand>
</feature>
<feature type="binding site" evidence="1">
    <location>
        <position position="159"/>
    </location>
    <ligand>
        <name>caffeine</name>
        <dbReference type="ChEBI" id="CHEBI:27732"/>
    </ligand>
</feature>
<feature type="binding site" evidence="1">
    <location>
        <position position="160"/>
    </location>
    <ligand>
        <name>caffeine</name>
        <dbReference type="ChEBI" id="CHEBI:27732"/>
    </ligand>
</feature>
<feature type="binding site" evidence="2">
    <location>
        <position position="177"/>
    </location>
    <ligand>
        <name>Mg(2+)</name>
        <dbReference type="ChEBI" id="CHEBI:18420"/>
    </ligand>
</feature>
<feature type="binding site" evidence="1">
    <location>
        <position position="225"/>
    </location>
    <ligand>
        <name>caffeine</name>
        <dbReference type="ChEBI" id="CHEBI:27732"/>
    </ligand>
</feature>
<feature type="binding site" evidence="2">
    <location>
        <position position="263"/>
    </location>
    <ligand>
        <name>Mg(2+)</name>
        <dbReference type="ChEBI" id="CHEBI:18420"/>
    </ligand>
</feature>
<feature type="binding site" evidence="2">
    <location>
        <position position="265"/>
    </location>
    <ligand>
        <name>Mg(2+)</name>
        <dbReference type="ChEBI" id="CHEBI:18420"/>
    </ligand>
</feature>
<feature type="binding site" evidence="2">
    <location>
        <position position="266"/>
    </location>
    <ligand>
        <name>Mg(2+)</name>
        <dbReference type="ChEBI" id="CHEBI:18420"/>
    </ligand>
</feature>
<feature type="binding site" evidence="1">
    <location>
        <position position="321"/>
    </location>
    <ligand>
        <name>caffeine</name>
        <dbReference type="ChEBI" id="CHEBI:27732"/>
    </ligand>
</feature>
<feature type="site" description="Involved in substrate discrimination" evidence="3">
    <location>
        <position position="153"/>
    </location>
</feature>
<feature type="site" description="Involved in substrate discrimination" evidence="3">
    <location>
        <position position="225"/>
    </location>
</feature>
<feature type="site" description="Involved in substrate discrimination" evidence="3">
    <location>
        <position position="269"/>
    </location>
</feature>
<feature type="site" description="Involved in substrate discrimination" evidence="3">
    <location>
        <position position="317"/>
    </location>
</feature>
<feature type="site" description="Involved in substrate discrimination" evidence="3">
    <location>
        <position position="332"/>
    </location>
</feature>
<keyword id="KW-0017">Alkaloid metabolism</keyword>
<keyword id="KW-0460">Magnesium</keyword>
<keyword id="KW-0479">Metal-binding</keyword>
<keyword id="KW-0489">Methyltransferase</keyword>
<keyword id="KW-0949">S-adenosyl-L-methionine</keyword>
<keyword id="KW-0808">Transferase</keyword>
<accession>A0A6C0WW38</accession>
<comment type="function">
    <text evidence="4">Involved in the biosynthesis of caffeine in cv. Puer (PubMed:32193380). Involved in the biosynthesis of theacrine in cv. Kucha, a caffeine-like xanthine alkaloid with diverse beneficial biological activities including anti-depressive, sedative, and hypnotic activities, improving learning and memory, increasing exercise activity, and preventing nonalcoholic fatty liver disease (PubMed:32193380). Catalyzes the conversion of 7-methylxanthine (7mX) to theobromine and of theobromine to caffeine (PubMed:32193380). Has 3-N- and 1-N-methylation activity (PubMed:32193380).</text>
</comment>
<comment type="catalytic activity">
    <reaction evidence="4">
        <text>1,7-dimethylxanthine + S-adenosyl-L-methionine = caffeine + S-adenosyl-L-homocysteine + H(+)</text>
        <dbReference type="Rhea" id="RHEA:10280"/>
        <dbReference type="ChEBI" id="CHEBI:15378"/>
        <dbReference type="ChEBI" id="CHEBI:25858"/>
        <dbReference type="ChEBI" id="CHEBI:27732"/>
        <dbReference type="ChEBI" id="CHEBI:57856"/>
        <dbReference type="ChEBI" id="CHEBI:59789"/>
        <dbReference type="EC" id="2.1.1.160"/>
    </reaction>
    <physiologicalReaction direction="left-to-right" evidence="4">
        <dbReference type="Rhea" id="RHEA:10281"/>
    </physiologicalReaction>
</comment>
<comment type="catalytic activity">
    <reaction evidence="4">
        <text>theobromine + S-adenosyl-L-methionine = caffeine + S-adenosyl-L-homocysteine + H(+)</text>
        <dbReference type="Rhea" id="RHEA:20944"/>
        <dbReference type="ChEBI" id="CHEBI:15378"/>
        <dbReference type="ChEBI" id="CHEBI:27732"/>
        <dbReference type="ChEBI" id="CHEBI:28946"/>
        <dbReference type="ChEBI" id="CHEBI:57856"/>
        <dbReference type="ChEBI" id="CHEBI:59789"/>
        <dbReference type="EC" id="2.1.1.160"/>
    </reaction>
    <physiologicalReaction direction="left-to-right" evidence="4">
        <dbReference type="Rhea" id="RHEA:20945"/>
    </physiologicalReaction>
</comment>
<comment type="catalytic activity">
    <reaction evidence="4">
        <text>7-methylxanthine + S-adenosyl-L-methionine = theobromine + S-adenosyl-L-homocysteine + H(+)</text>
        <dbReference type="Rhea" id="RHEA:24604"/>
        <dbReference type="ChEBI" id="CHEBI:15378"/>
        <dbReference type="ChEBI" id="CHEBI:28946"/>
        <dbReference type="ChEBI" id="CHEBI:48991"/>
        <dbReference type="ChEBI" id="CHEBI:57856"/>
        <dbReference type="ChEBI" id="CHEBI:59789"/>
        <dbReference type="EC" id="2.1.1.160"/>
    </reaction>
    <physiologicalReaction direction="left-to-right" evidence="4">
        <dbReference type="Rhea" id="RHEA:24605"/>
    </physiologicalReaction>
</comment>
<comment type="cofactor">
    <cofactor evidence="2">
        <name>Mg(2+)</name>
        <dbReference type="ChEBI" id="CHEBI:18420"/>
    </cofactor>
    <text evidence="2">Binds 1 Mg(2+) ion per subunit.</text>
</comment>
<comment type="biophysicochemical properties">
    <kinetics>
        <KM evidence="4">71.49 uM for 1,3,7-trimethyluric acid</KM>
        <text evidence="4">kcat is 0.00012 sec(-1) with 1,3,7-trimethyluric acid as substrate.</text>
    </kinetics>
</comment>
<comment type="pathway">
    <text evidence="4">Alkaloid biosynthesis.</text>
</comment>
<comment type="miscellaneous">
    <text evidence="7">Caffeine is catabolized to produce theacrine in Camellia sinensis var. assamica cv. Kucha, but not in cv. Puer.</text>
</comment>
<comment type="similarity">
    <text evidence="6">Belongs to the methyltransferase superfamily. Type-7 methyltransferase family.</text>
</comment>
<gene>
    <name evidence="5" type="primary">CS</name>
</gene>
<organism>
    <name type="scientific">Camellia sinensis var. assamica</name>
    <name type="common">Assam tea</name>
    <name type="synonym">Thea assamica</name>
    <dbReference type="NCBI Taxonomy" id="261999"/>
    <lineage>
        <taxon>Eukaryota</taxon>
        <taxon>Viridiplantae</taxon>
        <taxon>Streptophyta</taxon>
        <taxon>Embryophyta</taxon>
        <taxon>Tracheophyta</taxon>
        <taxon>Spermatophyta</taxon>
        <taxon>Magnoliopsida</taxon>
        <taxon>eudicotyledons</taxon>
        <taxon>Gunneridae</taxon>
        <taxon>Pentapetalae</taxon>
        <taxon>asterids</taxon>
        <taxon>Ericales</taxon>
        <taxon>Theaceae</taxon>
        <taxon>Camellia</taxon>
    </lineage>
</organism>
<protein>
    <recommendedName>
        <fullName evidence="5">3,7-dimethylxanthine N-methyltransferase TCS1</fullName>
        <ecNumber evidence="4">2.1.1.160</ecNumber>
    </recommendedName>
    <alternativeName>
        <fullName evidence="5">Caffeine synthase</fullName>
        <shortName evidence="5">CkCS</shortName>
    </alternativeName>
</protein>
<reference key="1">
    <citation type="journal article" date="2020" name="Nat. Commun.">
        <title>Identification and characterization of N9-methyltransferase involved in converting caffeine into non-stimulatory theacrine in tea.</title>
        <authorList>
            <person name="Zhang Y.-H."/>
            <person name="Li Y.-F."/>
            <person name="Wang Y."/>
            <person name="Tan L."/>
            <person name="Cao Z.-Q."/>
            <person name="Xie C."/>
            <person name="Xie G."/>
            <person name="Gong H.-B."/>
            <person name="Sun W.-Y."/>
            <person name="Ouyang S.-H."/>
            <person name="Duan W.-J."/>
            <person name="Lu X."/>
            <person name="Ding K."/>
            <person name="Kurihara H."/>
            <person name="Hu D."/>
            <person name="Zhang Z.-M."/>
            <person name="Abe I."/>
            <person name="He R.-R."/>
        </authorList>
    </citation>
    <scope>NUCLEOTIDE SEQUENCE [MRNA]</scope>
    <scope>FUNCTION</scope>
    <scope>CATALYTIC ACTIVITY</scope>
    <scope>PATHWAY</scope>
    <scope>BIOPHYSICOCHEMICAL PROPERTIES</scope>
    <source>
        <strain>cv. Kucha</strain>
    </source>
</reference>